<proteinExistence type="evidence at protein level"/>
<evidence type="ECO:0000250" key="1"/>
<evidence type="ECO:0000269" key="2">
    <source>
    </source>
</evidence>
<evidence type="ECO:0000269" key="3">
    <source>
    </source>
</evidence>
<evidence type="ECO:0000305" key="4"/>
<dbReference type="EMBL" id="CU329670">
    <property type="protein sequence ID" value="CAB66316.3"/>
    <property type="molecule type" value="Genomic_DNA"/>
</dbReference>
<dbReference type="PIR" id="T50091">
    <property type="entry name" value="T50091"/>
</dbReference>
<dbReference type="PIR" id="T50307">
    <property type="entry name" value="T50307"/>
</dbReference>
<dbReference type="RefSeq" id="XP_001713110.1">
    <property type="nucleotide sequence ID" value="XM_001713058.2"/>
</dbReference>
<dbReference type="BioGRID" id="280531">
    <property type="interactions" value="22"/>
</dbReference>
<dbReference type="ComplexPortal" id="CPX-9077">
    <property type="entry name" value="26S proteasome complex"/>
</dbReference>
<dbReference type="FunCoup" id="Q9P7H8">
    <property type="interactions" value="735"/>
</dbReference>
<dbReference type="STRING" id="284812.Q9P7H8"/>
<dbReference type="PaxDb" id="4896-SPAC1782.01.1"/>
<dbReference type="EnsemblFungi" id="SPAC1782.01.1">
    <property type="protein sequence ID" value="SPAC1782.01.1:pep"/>
    <property type="gene ID" value="SPAC1782.01"/>
</dbReference>
<dbReference type="PomBase" id="SPAC1782.01">
    <property type="gene designation" value="ecm29"/>
</dbReference>
<dbReference type="VEuPathDB" id="FungiDB:SPAC1782.01"/>
<dbReference type="eggNOG" id="KOG0915">
    <property type="taxonomic scope" value="Eukaryota"/>
</dbReference>
<dbReference type="HOGENOM" id="CLU_000880_2_1_1"/>
<dbReference type="InParanoid" id="Q9P7H8"/>
<dbReference type="OMA" id="STRMEFS"/>
<dbReference type="PhylomeDB" id="Q9P7H8"/>
<dbReference type="PRO" id="PR:Q9P7H8"/>
<dbReference type="Proteomes" id="UP000002485">
    <property type="component" value="Chromosome I"/>
</dbReference>
<dbReference type="GO" id="GO:0005737">
    <property type="term" value="C:cytoplasm"/>
    <property type="evidence" value="ECO:0000318"/>
    <property type="project" value="GO_Central"/>
</dbReference>
<dbReference type="GO" id="GO:0005829">
    <property type="term" value="C:cytosol"/>
    <property type="evidence" value="ECO:0007005"/>
    <property type="project" value="PomBase"/>
</dbReference>
<dbReference type="GO" id="GO:0005634">
    <property type="term" value="C:nucleus"/>
    <property type="evidence" value="ECO:0007005"/>
    <property type="project" value="PomBase"/>
</dbReference>
<dbReference type="GO" id="GO:0000502">
    <property type="term" value="C:proteasome complex"/>
    <property type="evidence" value="ECO:0007669"/>
    <property type="project" value="UniProtKB-KW"/>
</dbReference>
<dbReference type="GO" id="GO:0060090">
    <property type="term" value="F:molecular adaptor activity"/>
    <property type="evidence" value="ECO:0000318"/>
    <property type="project" value="GO_Central"/>
</dbReference>
<dbReference type="GO" id="GO:0036503">
    <property type="term" value="P:ERAD pathway"/>
    <property type="evidence" value="ECO:0000318"/>
    <property type="project" value="GO_Central"/>
</dbReference>
<dbReference type="GO" id="GO:0043248">
    <property type="term" value="P:proteasome assembly"/>
    <property type="evidence" value="ECO:0000266"/>
    <property type="project" value="PomBase"/>
</dbReference>
<dbReference type="Gene3D" id="1.25.10.10">
    <property type="entry name" value="Leucine-rich Repeat Variant"/>
    <property type="match status" value="2"/>
</dbReference>
<dbReference type="InterPro" id="IPR011989">
    <property type="entry name" value="ARM-like"/>
</dbReference>
<dbReference type="InterPro" id="IPR016024">
    <property type="entry name" value="ARM-type_fold"/>
</dbReference>
<dbReference type="InterPro" id="IPR024372">
    <property type="entry name" value="Ecm29_N"/>
</dbReference>
<dbReference type="InterPro" id="IPR055443">
    <property type="entry name" value="HEAT_ECM29"/>
</dbReference>
<dbReference type="PANTHER" id="PTHR23346:SF19">
    <property type="entry name" value="PROTEASOME ADAPTER AND SCAFFOLD PROTEIN ECM29"/>
    <property type="match status" value="1"/>
</dbReference>
<dbReference type="PANTHER" id="PTHR23346">
    <property type="entry name" value="TRANSLATIONAL ACTIVATOR GCN1-RELATED"/>
    <property type="match status" value="1"/>
</dbReference>
<dbReference type="Pfam" id="PF23731">
    <property type="entry name" value="ARM_ECM29_C"/>
    <property type="match status" value="1"/>
</dbReference>
<dbReference type="Pfam" id="PF13001">
    <property type="entry name" value="ECM29_N"/>
    <property type="match status" value="2"/>
</dbReference>
<dbReference type="Pfam" id="PF24492">
    <property type="entry name" value="HEAT_ECM29"/>
    <property type="match status" value="1"/>
</dbReference>
<dbReference type="SUPFAM" id="SSF48371">
    <property type="entry name" value="ARM repeat"/>
    <property type="match status" value="3"/>
</dbReference>
<name>ECM29_SCHPO</name>
<keyword id="KW-0963">Cytoplasm</keyword>
<keyword id="KW-0539">Nucleus</keyword>
<keyword id="KW-0647">Proteasome</keyword>
<keyword id="KW-1185">Reference proteome</keyword>
<keyword id="KW-0677">Repeat</keyword>
<accession>Q9P7H8</accession>
<accession>Q9P7Y5</accession>
<reference key="1">
    <citation type="journal article" date="2002" name="Nature">
        <title>The genome sequence of Schizosaccharomyces pombe.</title>
        <authorList>
            <person name="Wood V."/>
            <person name="Gwilliam R."/>
            <person name="Rajandream M.A."/>
            <person name="Lyne M.H."/>
            <person name="Lyne R."/>
            <person name="Stewart A."/>
            <person name="Sgouros J.G."/>
            <person name="Peat N."/>
            <person name="Hayles J."/>
            <person name="Baker S.G."/>
            <person name="Basham D."/>
            <person name="Bowman S."/>
            <person name="Brooks K."/>
            <person name="Brown D."/>
            <person name="Brown S."/>
            <person name="Chillingworth T."/>
            <person name="Churcher C.M."/>
            <person name="Collins M."/>
            <person name="Connor R."/>
            <person name="Cronin A."/>
            <person name="Davis P."/>
            <person name="Feltwell T."/>
            <person name="Fraser A."/>
            <person name="Gentles S."/>
            <person name="Goble A."/>
            <person name="Hamlin N."/>
            <person name="Harris D.E."/>
            <person name="Hidalgo J."/>
            <person name="Hodgson G."/>
            <person name="Holroyd S."/>
            <person name="Hornsby T."/>
            <person name="Howarth S."/>
            <person name="Huckle E.J."/>
            <person name="Hunt S."/>
            <person name="Jagels K."/>
            <person name="James K.D."/>
            <person name="Jones L."/>
            <person name="Jones M."/>
            <person name="Leather S."/>
            <person name="McDonald S."/>
            <person name="McLean J."/>
            <person name="Mooney P."/>
            <person name="Moule S."/>
            <person name="Mungall K.L."/>
            <person name="Murphy L.D."/>
            <person name="Niblett D."/>
            <person name="Odell C."/>
            <person name="Oliver K."/>
            <person name="O'Neil S."/>
            <person name="Pearson D."/>
            <person name="Quail M.A."/>
            <person name="Rabbinowitsch E."/>
            <person name="Rutherford K.M."/>
            <person name="Rutter S."/>
            <person name="Saunders D."/>
            <person name="Seeger K."/>
            <person name="Sharp S."/>
            <person name="Skelton J."/>
            <person name="Simmonds M.N."/>
            <person name="Squares R."/>
            <person name="Squares S."/>
            <person name="Stevens K."/>
            <person name="Taylor K."/>
            <person name="Taylor R.G."/>
            <person name="Tivey A."/>
            <person name="Walsh S.V."/>
            <person name="Warren T."/>
            <person name="Whitehead S."/>
            <person name="Woodward J.R."/>
            <person name="Volckaert G."/>
            <person name="Aert R."/>
            <person name="Robben J."/>
            <person name="Grymonprez B."/>
            <person name="Weltjens I."/>
            <person name="Vanstreels E."/>
            <person name="Rieger M."/>
            <person name="Schaefer M."/>
            <person name="Mueller-Auer S."/>
            <person name="Gabel C."/>
            <person name="Fuchs M."/>
            <person name="Duesterhoeft A."/>
            <person name="Fritzc C."/>
            <person name="Holzer E."/>
            <person name="Moestl D."/>
            <person name="Hilbert H."/>
            <person name="Borzym K."/>
            <person name="Langer I."/>
            <person name="Beck A."/>
            <person name="Lehrach H."/>
            <person name="Reinhardt R."/>
            <person name="Pohl T.M."/>
            <person name="Eger P."/>
            <person name="Zimmermann W."/>
            <person name="Wedler H."/>
            <person name="Wambutt R."/>
            <person name="Purnelle B."/>
            <person name="Goffeau A."/>
            <person name="Cadieu E."/>
            <person name="Dreano S."/>
            <person name="Gloux S."/>
            <person name="Lelaure V."/>
            <person name="Mottier S."/>
            <person name="Galibert F."/>
            <person name="Aves S.J."/>
            <person name="Xiang Z."/>
            <person name="Hunt C."/>
            <person name="Moore K."/>
            <person name="Hurst S.M."/>
            <person name="Lucas M."/>
            <person name="Rochet M."/>
            <person name="Gaillardin C."/>
            <person name="Tallada V.A."/>
            <person name="Garzon A."/>
            <person name="Thode G."/>
            <person name="Daga R.R."/>
            <person name="Cruzado L."/>
            <person name="Jimenez J."/>
            <person name="Sanchez M."/>
            <person name="del Rey F."/>
            <person name="Benito J."/>
            <person name="Dominguez A."/>
            <person name="Revuelta J.L."/>
            <person name="Moreno S."/>
            <person name="Armstrong J."/>
            <person name="Forsburg S.L."/>
            <person name="Cerutti L."/>
            <person name="Lowe T."/>
            <person name="McCombie W.R."/>
            <person name="Paulsen I."/>
            <person name="Potashkin J."/>
            <person name="Shpakovski G.V."/>
            <person name="Ussery D."/>
            <person name="Barrell B.G."/>
            <person name="Nurse P."/>
        </authorList>
    </citation>
    <scope>NUCLEOTIDE SEQUENCE [LARGE SCALE GENOMIC DNA]</scope>
    <source>
        <strain>972 / ATCC 24843</strain>
    </source>
</reference>
<reference key="2">
    <citation type="journal article" date="2006" name="Nat. Biotechnol.">
        <title>ORFeome cloning and global analysis of protein localization in the fission yeast Schizosaccharomyces pombe.</title>
        <authorList>
            <person name="Matsuyama A."/>
            <person name="Arai R."/>
            <person name="Yashiroda Y."/>
            <person name="Shirai A."/>
            <person name="Kamata A."/>
            <person name="Sekido S."/>
            <person name="Kobayashi Y."/>
            <person name="Hashimoto A."/>
            <person name="Hamamoto M."/>
            <person name="Hiraoka Y."/>
            <person name="Horinouchi S."/>
            <person name="Yoshida M."/>
        </authorList>
    </citation>
    <scope>SUBCELLULAR LOCATION [LARGE SCALE ANALYSIS]</scope>
</reference>
<reference key="3">
    <citation type="journal article" date="2010" name="PLoS Biol.">
        <title>A global census of fission yeast deubiquitinating enzyme localization and interaction networks reveals distinct compartmentalization profiles and overlapping functions in endocytosis and polarity.</title>
        <authorList>
            <person name="Kouranti I."/>
            <person name="McLean J.R."/>
            <person name="Feoktistova A."/>
            <person name="Liang P."/>
            <person name="Johnson A.E."/>
            <person name="Roberts-Galbraith R.H."/>
            <person name="Gould K.L."/>
        </authorList>
    </citation>
    <scope>IDENTIFICATION BY MASS SPECTROMETRY</scope>
    <scope>IDENTIFICATION IN THE 26S PROTEASOME</scope>
</reference>
<organism>
    <name type="scientific">Schizosaccharomyces pombe (strain 972 / ATCC 24843)</name>
    <name type="common">Fission yeast</name>
    <dbReference type="NCBI Taxonomy" id="284812"/>
    <lineage>
        <taxon>Eukaryota</taxon>
        <taxon>Fungi</taxon>
        <taxon>Dikarya</taxon>
        <taxon>Ascomycota</taxon>
        <taxon>Taphrinomycotina</taxon>
        <taxon>Schizosaccharomycetes</taxon>
        <taxon>Schizosaccharomycetales</taxon>
        <taxon>Schizosaccharomycetaceae</taxon>
        <taxon>Schizosaccharomyces</taxon>
    </lineage>
</organism>
<sequence>MAENELRLLNNAELKLALAESEDSFQSLVSVFLCPILLKLDSPHESVRNKTISIANHIMTRLNNNAQAILPLEALVSQYVEANQPLRKRFLLAFISIGEKRIPCSENLALLQICLNHVNEYPLVLLTLTIRLLRFSKPTSAITCSNDVILSLSSFYLIQKDQRIFSDLQFSQKTVDYRLSLLRWIHLSSWPSNWKWLAYFFASADSHSEVARLADEFTRDSGLPDLENLSHVNVLLDIALDKFRIEALHANFSVSISLRNKAIQHLLKSKIAANTDKAINCIEFILEAPPSMQPRLIQFTRWVVDKADPNFLKPKAAMILEKILSILSSNIIQSDLLRGFLYTTIGLLTKVDNHLITNSLLTNLLTSLQSELPDVRVSIDEALSIIIPYYSNFRFSNELLPVLEPFIFDSPESPAAYCALRFVLVAFPFDYLPARFICLKVQNPFVFHHSFIEEAKKGLNLSQWVQYNSVYSTNEAQEEDKVRAASYPSASEVISFILSDHDLKKFWESNAAEYCLAILEFIERCIYYSADRSLELYDNDKLSSIDALLIQDSKLREMVSEKCISLSNFNVFLEYVFYGTLLMHFEPTYALSRLVSFAPPEVTFSLPELDFLTSVFNFPLALRNTATRILGIILSTKDSTRISEVLSSCFTIISTSNNKNDNFFKAETALLIIGYTISYLAAQTNSAAVDSFILNSGSIKEFFSVLLEYLGSNVLHKKTTSLAIYKELFVYFTRDWITSYGVDFDEILNVLLRFLKEVEDTNVKVECLHVISRMSLSFSDDEMAEKILKAIYVTYHMDSPDILFASAEAMSILAGGHRNVFVKSTCPIFFQKQLDNYKADHYCFTLDFILTDCVNSPKPLLRRASSLWLFYIVRYCEPQTYTMTRLNDIYHSFLSFLVTQDDFVQDTASRGLKAMYDVLEGDERKSFTDNLISTIAADRVDEKTKAPLDADTALFTTNKGTVATYKDICSLASESGNPDLIYSFLSIAGNSSLWQARKGLASGISYLGIPEDQKRKTFSFDTSKSSSLLKKLYRFKHDPNPDVAKTMGEIWDTLVPSDLNLASHRKYLVEDCLEFMGSRSWRDRESSVNTLVSLLSNVPVTEYLNQLEDIWNMSFRTLDDIKESVREASFPLCKLLARSVIQSLEKTSHNTSPSGICKGKRIVSVALPFLLKHAYDQAKEVRSLTYSTITELVRTGNSTLTSFVPAIMQVMLEYLTEYESKAATFLDFHAKNYSIKQENIDNARTSAVQSSSMMDTLEKCIGLLDESSMQTLYPILNRMIAKPGGVPTKIGSAQVVMLLVIRRGPLVKQFASKLLQSLKSSCFDRNAAVSDAFASAIGYLLRVCPLEIASQTCQEIIDKFYDGNTNEQIISSKLTVYASRYAPDVFLNLGSLFFPFIFFGKHSSSISINGVLSKAWDELSSAGSSVNLYSEEIILLIQKNLIVTKWDVKRPAAAALLEFVNTSRLTYRQNDIYVLLNETMKDKSWPGKELLLEAYVKFLIKYPEFIKSQKMEEVHQVIVREFKRRNIVYKSHAMESVGELLSDENYRELDLYELSLNECGTFLQKEWFDKDDELNLEEKIALQRNSVYAMFNSSRPGNKNCNEMLLTYLSNALDENYLHWNVKLAILKNAPHLKKIMSNEEFLLYKDILYRCYEDNPSPKAKDYAEVIFGENYLSVLRN</sequence>
<feature type="chain" id="PRO_0000116846" description="Proteasome component ecm29">
    <location>
        <begin position="1"/>
        <end position="1679"/>
    </location>
</feature>
<feature type="repeat" description="HEAT 1">
    <location>
        <begin position="27"/>
        <end position="64"/>
    </location>
</feature>
<feature type="repeat" description="HEAT 2">
    <location>
        <begin position="66"/>
        <end position="103"/>
    </location>
</feature>
<feature type="repeat" description="HEAT 3">
    <location>
        <begin position="105"/>
        <end position="142"/>
    </location>
</feature>
<feature type="repeat" description="HEAT 4">
    <location>
        <begin position="314"/>
        <end position="354"/>
    </location>
</feature>
<feature type="repeat" description="HEAT 5">
    <location>
        <begin position="355"/>
        <end position="392"/>
    </location>
</feature>
<feature type="repeat" description="HEAT 6">
    <location>
        <begin position="394"/>
        <end position="431"/>
    </location>
</feature>
<feature type="repeat" description="HEAT 7">
    <location>
        <begin position="513"/>
        <end position="551"/>
    </location>
</feature>
<feature type="repeat" description="HEAT 8">
    <location>
        <begin position="697"/>
        <end position="734"/>
    </location>
</feature>
<feature type="repeat" description="HEAT 9">
    <location>
        <begin position="742"/>
        <end position="780"/>
    </location>
</feature>
<feature type="repeat" description="HEAT 10">
    <location>
        <begin position="840"/>
        <end position="878"/>
    </location>
</feature>
<feature type="repeat" description="HEAT 11">
    <location>
        <begin position="884"/>
        <end position="921"/>
    </location>
</feature>
<feature type="repeat" description="HEAT 12">
    <location>
        <begin position="1023"/>
        <end position="1060"/>
    </location>
</feature>
<feature type="repeat" description="HEAT 13">
    <location>
        <begin position="1089"/>
        <end position="1127"/>
    </location>
</feature>
<feature type="repeat" description="HEAT 14">
    <location>
        <begin position="1160"/>
        <end position="1198"/>
    </location>
</feature>
<feature type="repeat" description="HEAT 15">
    <location>
        <begin position="1202"/>
        <end position="1239"/>
    </location>
</feature>
<feature type="repeat" description="HEAT 16">
    <location>
        <begin position="1267"/>
        <end position="1305"/>
    </location>
</feature>
<feature type="repeat" description="HEAT 17">
    <location>
        <begin position="1309"/>
        <end position="1346"/>
    </location>
</feature>
<feature type="repeat" description="HEAT 18">
    <location>
        <begin position="1467"/>
        <end position="1504"/>
    </location>
</feature>
<feature type="repeat" description="HEAT 19">
    <location>
        <begin position="1509"/>
        <end position="1546"/>
    </location>
</feature>
<feature type="repeat" description="HEAT 20">
    <location>
        <begin position="1600"/>
        <end position="1639"/>
    </location>
</feature>
<comment type="function">
    <text evidence="1">Stabilizes the proteasome holoenzyme, probably by tethering the 20S proteolytic core particle and the 19S regulatory particle. The proteasome is a multicatalytic proteinase complex which is characterized by its ability to cleave peptides with Arg, Phe, Tyr, Leu, and Glu adjacent to the leaving group at neutral or slightly basic pH. The proteasome has an ATP-dependent proteolytic activity (By similarity).</text>
</comment>
<comment type="subunit">
    <text evidence="3">Component of the proteasome.</text>
</comment>
<comment type="subcellular location">
    <subcellularLocation>
        <location evidence="2">Cytoplasm</location>
    </subcellularLocation>
    <subcellularLocation>
        <location evidence="2">Nucleus</location>
    </subcellularLocation>
</comment>
<comment type="similarity">
    <text evidence="4">Belongs to the ECM29 family.</text>
</comment>
<protein>
    <recommendedName>
        <fullName>Proteasome component ecm29</fullName>
    </recommendedName>
</protein>
<gene>
    <name type="primary">ecm29</name>
    <name type="ORF">SPAC1782.01</name>
    <name type="ORF">SPAPYUG7.07</name>
</gene>